<gene>
    <name type="primary">PIN1</name>
</gene>
<accession>P0DMT5</accession>
<reference key="1">
    <citation type="journal article" date="2015" name="Nature">
        <title>Theileria parasites secrete a prolyl isomerase to maintain host leukocyte transformation.</title>
        <authorList>
            <person name="Marsolier J."/>
            <person name="Perichon M."/>
            <person name="DeBarry J.D."/>
            <person name="Villoutreix B.O."/>
            <person name="Chluba J."/>
            <person name="Lopez T."/>
            <person name="Garrido C."/>
            <person name="Zhou X.Z."/>
            <person name="Lu K.P."/>
            <person name="Fritsch L."/>
            <person name="Ait-Si-Ali S."/>
            <person name="Mhadhbi M."/>
            <person name="Medjkane S."/>
            <person name="Weitzman J.B."/>
        </authorList>
    </citation>
    <scope>NUCLEOTIDE SEQUENCE [GENOMIC DNA]</scope>
    <scope>CATALYTIC ACTIVITY</scope>
    <scope>ACTIVITY REGULATION</scope>
</reference>
<organism>
    <name type="scientific">Theileria annulata</name>
    <dbReference type="NCBI Taxonomy" id="5874"/>
    <lineage>
        <taxon>Eukaryota</taxon>
        <taxon>Sar</taxon>
        <taxon>Alveolata</taxon>
        <taxon>Apicomplexa</taxon>
        <taxon>Aconoidasida</taxon>
        <taxon>Piroplasmida</taxon>
        <taxon>Theileriidae</taxon>
        <taxon>Theileria</taxon>
    </lineage>
</organism>
<name>PIN1B_THEAN</name>
<proteinExistence type="evidence at protein level"/>
<comment type="function">
    <text evidence="1">Peptidyl-prolyl cis/trans isomerase (PPIase) that acts as a key virulence factor by promoting host leukocyte transformation. Binds to and isomerizes specific phosphorylated Ser/Thr-Pro (pSer/Thr-Pro) motifs in a subset of proteins, resulting in conformational changes in the proteins. Promotes host leukocyte transformation by binding to phosphorylated host FBXW7, disrupting dimerization and promoting FBXW7 autoubiquitination and subsequent degradation. Degradation of host FBXW7, leads to stabilization of JUN, which promotes cell transformation.</text>
</comment>
<comment type="catalytic activity">
    <reaction evidence="4">
        <text>[protein]-peptidylproline (omega=180) = [protein]-peptidylproline (omega=0)</text>
        <dbReference type="Rhea" id="RHEA:16237"/>
        <dbReference type="Rhea" id="RHEA-COMP:10747"/>
        <dbReference type="Rhea" id="RHEA-COMP:10748"/>
        <dbReference type="ChEBI" id="CHEBI:83833"/>
        <dbReference type="ChEBI" id="CHEBI:83834"/>
        <dbReference type="EC" id="5.2.1.8"/>
    </reaction>
</comment>
<comment type="activity regulation">
    <text evidence="4">Directly inhibited by juglone anti-parasite drug. Not inhibited by buparvaquone anti-parasite drug.</text>
</comment>
<comment type="subunit">
    <text evidence="1">Interacts with host FBXW7; leading to FBXW7 autoubiquitination and subsequent degradation.</text>
</comment>
<comment type="subcellular location">
    <subcellularLocation>
        <location evidence="1">Secreted</location>
    </subcellularLocation>
    <subcellularLocation>
        <location evidence="1">Host cytoplasm</location>
    </subcellularLocation>
    <subcellularLocation>
        <location evidence="1">Host nucleus</location>
    </subcellularLocation>
</comment>
<comment type="miscellaneous">
    <text evidence="1">PIN1 harbors a single amino acid variation in strains sensitive to buparvaquone (AC Q4UG71).</text>
</comment>
<evidence type="ECO:0000250" key="1">
    <source>
        <dbReference type="UniProtKB" id="Q4UG71"/>
    </source>
</evidence>
<evidence type="ECO:0000255" key="2"/>
<evidence type="ECO:0000255" key="3">
    <source>
        <dbReference type="PROSITE-ProRule" id="PRU00278"/>
    </source>
</evidence>
<evidence type="ECO:0000269" key="4">
    <source>
    </source>
</evidence>
<protein>
    <recommendedName>
        <fullName>Buparvaquone-resistant peptidyl-prolyl cis-trans isomerase NIMA-interacting 1</fullName>
        <ecNumber evidence="4">5.2.1.8</ecNumber>
    </recommendedName>
    <alternativeName>
        <fullName>Peptidyl-prolyl cis-trans isomerase Pin1</fullName>
        <shortName>PPIase Pin1</shortName>
    </alternativeName>
    <alternativeName>
        <fullName>Rotamase Pin1</fullName>
    </alternativeName>
</protein>
<keyword id="KW-1035">Host cytoplasm</keyword>
<keyword id="KW-1048">Host nucleus</keyword>
<keyword id="KW-0413">Isomerase</keyword>
<keyword id="KW-0697">Rotamase</keyword>
<keyword id="KW-0964">Secreted</keyword>
<keyword id="KW-0732">Signal</keyword>
<keyword id="KW-0843">Virulence</keyword>
<dbReference type="EC" id="5.2.1.8" evidence="4"/>
<dbReference type="SMR" id="P0DMT5"/>
<dbReference type="VEuPathDB" id="PiroplasmaDB:TA18945"/>
<dbReference type="GO" id="GO:0005829">
    <property type="term" value="C:cytosol"/>
    <property type="evidence" value="ECO:0007669"/>
    <property type="project" value="TreeGrafter"/>
</dbReference>
<dbReference type="GO" id="GO:0005576">
    <property type="term" value="C:extracellular region"/>
    <property type="evidence" value="ECO:0007669"/>
    <property type="project" value="UniProtKB-SubCell"/>
</dbReference>
<dbReference type="GO" id="GO:0030430">
    <property type="term" value="C:host cell cytoplasm"/>
    <property type="evidence" value="ECO:0007669"/>
    <property type="project" value="UniProtKB-SubCell"/>
</dbReference>
<dbReference type="GO" id="GO:0042025">
    <property type="term" value="C:host cell nucleus"/>
    <property type="evidence" value="ECO:0007669"/>
    <property type="project" value="UniProtKB-SubCell"/>
</dbReference>
<dbReference type="GO" id="GO:0005634">
    <property type="term" value="C:nucleus"/>
    <property type="evidence" value="ECO:0007669"/>
    <property type="project" value="TreeGrafter"/>
</dbReference>
<dbReference type="GO" id="GO:0003755">
    <property type="term" value="F:peptidyl-prolyl cis-trans isomerase activity"/>
    <property type="evidence" value="ECO:0007669"/>
    <property type="project" value="UniProtKB-KW"/>
</dbReference>
<dbReference type="FunFam" id="3.10.50.40:FF:000010">
    <property type="entry name" value="Peptidyl-prolyl cis-trans isomerase Pin1"/>
    <property type="match status" value="1"/>
</dbReference>
<dbReference type="Gene3D" id="3.10.50.40">
    <property type="match status" value="1"/>
</dbReference>
<dbReference type="InterPro" id="IPR046357">
    <property type="entry name" value="PPIase_dom_sf"/>
</dbReference>
<dbReference type="InterPro" id="IPR051370">
    <property type="entry name" value="PPIase_Pin1"/>
</dbReference>
<dbReference type="InterPro" id="IPR000297">
    <property type="entry name" value="PPIase_PpiC"/>
</dbReference>
<dbReference type="PANTHER" id="PTHR10657">
    <property type="entry name" value="PEPTIDYL-PROLYL CIS-TRANS ISOMERASE"/>
    <property type="match status" value="1"/>
</dbReference>
<dbReference type="PANTHER" id="PTHR10657:SF4">
    <property type="entry name" value="PEPTIDYL-PROLYL CIS-TRANS ISOMERASE-RELATED"/>
    <property type="match status" value="1"/>
</dbReference>
<dbReference type="Pfam" id="PF00639">
    <property type="entry name" value="Rotamase"/>
    <property type="match status" value="1"/>
</dbReference>
<dbReference type="SUPFAM" id="SSF54534">
    <property type="entry name" value="FKBP-like"/>
    <property type="match status" value="1"/>
</dbReference>
<dbReference type="PROSITE" id="PS50198">
    <property type="entry name" value="PPIC_PPIASE_2"/>
    <property type="match status" value="1"/>
</dbReference>
<sequence>MIRNFLNFLWNNTSLRFLIINTIIFAMDKVRCAHLLLKHTGSRNPVNRNTGMPVTRTKEEAVSEMKGYLEMLRKSDNLDQEFRRLATAKSECSSARKGGDLGFFDRNTMQKPFTEASFKLEVNEISDLVETDSGVHLIYRIA</sequence>
<feature type="signal peptide" evidence="2">
    <location>
        <begin position="1"/>
        <end position="32"/>
    </location>
</feature>
<feature type="chain" id="PRO_0000432707" description="Buparvaquone-resistant peptidyl-prolyl cis-trans isomerase NIMA-interacting 1" evidence="2">
    <location>
        <begin position="33"/>
        <end position="142"/>
    </location>
</feature>
<feature type="domain" description="PpiC" evidence="3">
    <location>
        <begin position="34"/>
        <end position="142"/>
    </location>
</feature>